<accession>Q8TBQ9</accession>
<accession>Q0P692</accession>
<evidence type="ECO:0000255" key="1"/>
<evidence type="ECO:0000269" key="2">
    <source>
    </source>
</evidence>
<evidence type="ECO:0000305" key="3"/>
<comment type="function">
    <text evidence="2">Involved in the early part of the secretory pathway.</text>
</comment>
<comment type="interaction">
    <interactant intactId="EBI-13383218">
        <id>Q8TBQ9</id>
    </interactant>
    <interactant intactId="EBI-725665">
        <id>Q9Y5U9</id>
        <label>IER3IP1</label>
    </interactant>
    <organismsDiffer>false</organismsDiffer>
    <experiments>5</experiments>
</comment>
<comment type="subcellular location">
    <subcellularLocation>
        <location evidence="2">Golgi apparatus membrane</location>
        <topology evidence="2">Single-pass type I membrane protein</topology>
    </subcellularLocation>
</comment>
<comment type="similarity">
    <text evidence="3">Belongs to the KISH family.</text>
</comment>
<sequence>MSAIFNFQSLLTVILLLICTCAYIRSLAPSLLDRNKTGLLGIFWKCARIGERKSPYVAVCCIVMAFSILFIQ</sequence>
<keyword id="KW-0325">Glycoprotein</keyword>
<keyword id="KW-0333">Golgi apparatus</keyword>
<keyword id="KW-0472">Membrane</keyword>
<keyword id="KW-1267">Proteomics identification</keyword>
<keyword id="KW-1185">Reference proteome</keyword>
<keyword id="KW-0732">Signal</keyword>
<keyword id="KW-0812">Transmembrane</keyword>
<keyword id="KW-1133">Transmembrane helix</keyword>
<reference key="1">
    <citation type="journal article" date="2004" name="Genome Res.">
        <title>The status, quality, and expansion of the NIH full-length cDNA project: the Mammalian Gene Collection (MGC).</title>
        <authorList>
            <consortium name="The MGC Project Team"/>
        </authorList>
    </citation>
    <scope>NUCLEOTIDE SEQUENCE [LARGE SCALE MRNA]</scope>
    <source>
        <tissue>Brain</tissue>
        <tissue>Lung</tissue>
        <tissue>Testis</tissue>
    </source>
</reference>
<reference key="2">
    <citation type="journal article" date="2010" name="EMBO J.">
        <title>A genome-wide RNA interference screen identifies two novel components of the metazoan secretory pathway.</title>
        <authorList>
            <person name="Wendler F."/>
            <person name="Gillingham A.K."/>
            <person name="Sinka R."/>
            <person name="Rosa-Ferreira C."/>
            <person name="Gordon D.E."/>
            <person name="Franch-Marro X."/>
            <person name="Peden A.A."/>
            <person name="Vincent J.P."/>
            <person name="Munro S."/>
        </authorList>
    </citation>
    <scope>FUNCTION</scope>
    <scope>SUBCELLULAR LOCATION</scope>
</reference>
<reference key="3">
    <citation type="journal article" date="2011" name="BMC Syst. Biol.">
        <title>Initial characterization of the human central proteome.</title>
        <authorList>
            <person name="Burkard T.R."/>
            <person name="Planyavsky M."/>
            <person name="Kaupe I."/>
            <person name="Breitwieser F.P."/>
            <person name="Buerckstuemmer T."/>
            <person name="Bennett K.L."/>
            <person name="Superti-Furga G."/>
            <person name="Colinge J."/>
        </authorList>
    </citation>
    <scope>IDENTIFICATION BY MASS SPECTROMETRY [LARGE SCALE ANALYSIS]</scope>
</reference>
<feature type="signal peptide" evidence="1">
    <location>
        <begin position="1"/>
        <end position="26"/>
    </location>
</feature>
<feature type="chain" id="PRO_0000247768" description="Protein kish-A">
    <location>
        <begin position="27"/>
        <end position="72"/>
    </location>
</feature>
<feature type="topological domain" description="Extracellular" evidence="1">
    <location>
        <begin position="27"/>
        <end position="53"/>
    </location>
</feature>
<feature type="transmembrane region" description="Helical" evidence="1">
    <location>
        <begin position="54"/>
        <end position="71"/>
    </location>
</feature>
<feature type="topological domain" description="Cytoplasmic" evidence="1">
    <location>
        <position position="72"/>
    </location>
</feature>
<feature type="glycosylation site" description="N-linked (GlcNAc...) asparagine" evidence="1">
    <location>
        <position position="35"/>
    </location>
</feature>
<dbReference type="EMBL" id="BC026285">
    <property type="protein sequence ID" value="AAH26285.1"/>
    <property type="molecule type" value="mRNA"/>
</dbReference>
<dbReference type="EMBL" id="BC028585">
    <property type="protein sequence ID" value="AAH28585.1"/>
    <property type="molecule type" value="mRNA"/>
</dbReference>
<dbReference type="EMBL" id="BC107575">
    <property type="protein sequence ID" value="AAI07576.1"/>
    <property type="molecule type" value="mRNA"/>
</dbReference>
<dbReference type="CCDS" id="CCDS34198.1"/>
<dbReference type="RefSeq" id="NP_777569.1">
    <property type="nucleotide sequence ID" value="NM_174909.5"/>
</dbReference>
<dbReference type="BioGRID" id="127490">
    <property type="interactions" value="10"/>
</dbReference>
<dbReference type="FunCoup" id="Q8TBQ9">
    <property type="interactions" value="1249"/>
</dbReference>
<dbReference type="IntAct" id="Q8TBQ9">
    <property type="interactions" value="3"/>
</dbReference>
<dbReference type="MINT" id="Q8TBQ9"/>
<dbReference type="STRING" id="9606.ENSP00000424707"/>
<dbReference type="GlyCosmos" id="Q8TBQ9">
    <property type="glycosylation" value="1 site, No reported glycans"/>
</dbReference>
<dbReference type="GlyGen" id="Q8TBQ9">
    <property type="glycosylation" value="2 sites, 1 O-linked glycan (1 site)"/>
</dbReference>
<dbReference type="iPTMnet" id="Q8TBQ9"/>
<dbReference type="PhosphoSitePlus" id="Q8TBQ9"/>
<dbReference type="SwissPalm" id="Q8TBQ9"/>
<dbReference type="BioMuta" id="TMEM167A"/>
<dbReference type="DMDM" id="74730497"/>
<dbReference type="jPOST" id="Q8TBQ9"/>
<dbReference type="MassIVE" id="Q8TBQ9"/>
<dbReference type="PaxDb" id="9606-ENSP00000424707"/>
<dbReference type="PeptideAtlas" id="Q8TBQ9"/>
<dbReference type="ProteomicsDB" id="74039"/>
<dbReference type="Pumba" id="Q8TBQ9"/>
<dbReference type="TopDownProteomics" id="Q8TBQ9"/>
<dbReference type="Antibodypedia" id="82307">
    <property type="antibodies" value="1 antibodies from 1 providers"/>
</dbReference>
<dbReference type="DNASU" id="153339"/>
<dbReference type="Ensembl" id="ENST00000502346.2">
    <property type="protein sequence ID" value="ENSP00000424707.1"/>
    <property type="gene ID" value="ENSG00000174695.10"/>
</dbReference>
<dbReference type="GeneID" id="153339"/>
<dbReference type="KEGG" id="hsa:153339"/>
<dbReference type="MANE-Select" id="ENST00000502346.2">
    <property type="protein sequence ID" value="ENSP00000424707.1"/>
    <property type="RefSeq nucleotide sequence ID" value="NM_174909.5"/>
    <property type="RefSeq protein sequence ID" value="NP_777569.1"/>
</dbReference>
<dbReference type="UCSC" id="uc003khx.5">
    <property type="organism name" value="human"/>
</dbReference>
<dbReference type="AGR" id="HGNC:28330"/>
<dbReference type="CTD" id="153339"/>
<dbReference type="DisGeNET" id="153339"/>
<dbReference type="GeneCards" id="TMEM167A"/>
<dbReference type="HGNC" id="HGNC:28330">
    <property type="gene designation" value="TMEM167A"/>
</dbReference>
<dbReference type="HPA" id="ENSG00000174695">
    <property type="expression patterns" value="Low tissue specificity"/>
</dbReference>
<dbReference type="MIM" id="620000">
    <property type="type" value="gene"/>
</dbReference>
<dbReference type="neXtProt" id="NX_Q8TBQ9"/>
<dbReference type="OpenTargets" id="ENSG00000174695"/>
<dbReference type="PharmGKB" id="PA162405909"/>
<dbReference type="VEuPathDB" id="HostDB:ENSG00000174695"/>
<dbReference type="eggNOG" id="KOG3808">
    <property type="taxonomic scope" value="Eukaryota"/>
</dbReference>
<dbReference type="GeneTree" id="ENSGT00940000155186"/>
<dbReference type="HOGENOM" id="CLU_152663_1_1_1"/>
<dbReference type="InParanoid" id="Q8TBQ9"/>
<dbReference type="OMA" id="KVGFQGT"/>
<dbReference type="OrthoDB" id="10034655at2759"/>
<dbReference type="PAN-GO" id="Q8TBQ9">
    <property type="GO annotations" value="2 GO annotations based on evolutionary models"/>
</dbReference>
<dbReference type="PhylomeDB" id="Q8TBQ9"/>
<dbReference type="TreeFam" id="TF300138"/>
<dbReference type="PathwayCommons" id="Q8TBQ9"/>
<dbReference type="SignaLink" id="Q8TBQ9"/>
<dbReference type="BioGRID-ORCS" id="153339">
    <property type="hits" value="174 hits in 1084 CRISPR screens"/>
</dbReference>
<dbReference type="ChiTaRS" id="TMEM167A">
    <property type="organism name" value="human"/>
</dbReference>
<dbReference type="GenomeRNAi" id="153339"/>
<dbReference type="Pharos" id="Q8TBQ9">
    <property type="development level" value="Tdark"/>
</dbReference>
<dbReference type="PRO" id="PR:Q8TBQ9"/>
<dbReference type="Proteomes" id="UP000005640">
    <property type="component" value="Chromosome 5"/>
</dbReference>
<dbReference type="RNAct" id="Q8TBQ9">
    <property type="molecule type" value="protein"/>
</dbReference>
<dbReference type="Bgee" id="ENSG00000174695">
    <property type="expression patterns" value="Expressed in adrenal tissue and 191 other cell types or tissues"/>
</dbReference>
<dbReference type="GO" id="GO:0005794">
    <property type="term" value="C:Golgi apparatus"/>
    <property type="evidence" value="ECO:0000314"/>
    <property type="project" value="UniProtKB"/>
</dbReference>
<dbReference type="GO" id="GO:0000139">
    <property type="term" value="C:Golgi membrane"/>
    <property type="evidence" value="ECO:0007669"/>
    <property type="project" value="UniProtKB-SubCell"/>
</dbReference>
<dbReference type="GO" id="GO:0045054">
    <property type="term" value="P:constitutive secretory pathway"/>
    <property type="evidence" value="ECO:0000316"/>
    <property type="project" value="UniProtKB"/>
</dbReference>
<dbReference type="GO" id="GO:0046907">
    <property type="term" value="P:intracellular transport"/>
    <property type="evidence" value="ECO:0000318"/>
    <property type="project" value="GO_Central"/>
</dbReference>
<dbReference type="GO" id="GO:0009306">
    <property type="term" value="P:protein secretion"/>
    <property type="evidence" value="ECO:0000318"/>
    <property type="project" value="GO_Central"/>
</dbReference>
<dbReference type="InterPro" id="IPR051523">
    <property type="entry name" value="KISH_domain"/>
</dbReference>
<dbReference type="InterPro" id="IPR009653">
    <property type="entry name" value="Ksh1"/>
</dbReference>
<dbReference type="PANTHER" id="PTHR13229">
    <property type="entry name" value="PROTEIN KISH-A"/>
    <property type="match status" value="1"/>
</dbReference>
<dbReference type="Pfam" id="PF06842">
    <property type="entry name" value="DUF1242"/>
    <property type="match status" value="1"/>
</dbReference>
<protein>
    <recommendedName>
        <fullName>Protein kish-A</fullName>
    </recommendedName>
    <alternativeName>
        <fullName>Transmembrane protein 167</fullName>
    </alternativeName>
    <alternativeName>
        <fullName>Transmembrane protein 167A</fullName>
    </alternativeName>
</protein>
<name>KISHA_HUMAN</name>
<organism>
    <name type="scientific">Homo sapiens</name>
    <name type="common">Human</name>
    <dbReference type="NCBI Taxonomy" id="9606"/>
    <lineage>
        <taxon>Eukaryota</taxon>
        <taxon>Metazoa</taxon>
        <taxon>Chordata</taxon>
        <taxon>Craniata</taxon>
        <taxon>Vertebrata</taxon>
        <taxon>Euteleostomi</taxon>
        <taxon>Mammalia</taxon>
        <taxon>Eutheria</taxon>
        <taxon>Euarchontoglires</taxon>
        <taxon>Primates</taxon>
        <taxon>Haplorrhini</taxon>
        <taxon>Catarrhini</taxon>
        <taxon>Hominidae</taxon>
        <taxon>Homo</taxon>
    </lineage>
</organism>
<proteinExistence type="evidence at protein level"/>
<gene>
    <name type="primary">TMEM167A</name>
    <name type="synonym">TMEM167</name>
</gene>